<name>RPOC_LEPIN</name>
<feature type="chain" id="PRO_0000067751" description="DNA-directed RNA polymerase subunit beta'">
    <location>
        <begin position="1"/>
        <end position="1404"/>
    </location>
</feature>
<feature type="region of interest" description="Disordered" evidence="2">
    <location>
        <begin position="1380"/>
        <end position="1404"/>
    </location>
</feature>
<feature type="compositionally biased region" description="Acidic residues" evidence="2">
    <location>
        <begin position="1384"/>
        <end position="1404"/>
    </location>
</feature>
<feature type="binding site" evidence="1">
    <location>
        <position position="60"/>
    </location>
    <ligand>
        <name>Zn(2+)</name>
        <dbReference type="ChEBI" id="CHEBI:29105"/>
        <label>1</label>
    </ligand>
</feature>
<feature type="binding site" evidence="1">
    <location>
        <position position="62"/>
    </location>
    <ligand>
        <name>Zn(2+)</name>
        <dbReference type="ChEBI" id="CHEBI:29105"/>
        <label>1</label>
    </ligand>
</feature>
<feature type="binding site" evidence="1">
    <location>
        <position position="75"/>
    </location>
    <ligand>
        <name>Zn(2+)</name>
        <dbReference type="ChEBI" id="CHEBI:29105"/>
        <label>1</label>
    </ligand>
</feature>
<feature type="binding site" evidence="1">
    <location>
        <position position="78"/>
    </location>
    <ligand>
        <name>Zn(2+)</name>
        <dbReference type="ChEBI" id="CHEBI:29105"/>
        <label>1</label>
    </ligand>
</feature>
<feature type="binding site" evidence="1">
    <location>
        <position position="449"/>
    </location>
    <ligand>
        <name>Mg(2+)</name>
        <dbReference type="ChEBI" id="CHEBI:18420"/>
    </ligand>
</feature>
<feature type="binding site" evidence="1">
    <location>
        <position position="451"/>
    </location>
    <ligand>
        <name>Mg(2+)</name>
        <dbReference type="ChEBI" id="CHEBI:18420"/>
    </ligand>
</feature>
<feature type="binding site" evidence="1">
    <location>
        <position position="453"/>
    </location>
    <ligand>
        <name>Mg(2+)</name>
        <dbReference type="ChEBI" id="CHEBI:18420"/>
    </ligand>
</feature>
<feature type="binding site" evidence="1">
    <location>
        <position position="778"/>
    </location>
    <ligand>
        <name>Zn(2+)</name>
        <dbReference type="ChEBI" id="CHEBI:29105"/>
        <label>2</label>
    </ligand>
</feature>
<feature type="binding site" evidence="1">
    <location>
        <position position="852"/>
    </location>
    <ligand>
        <name>Zn(2+)</name>
        <dbReference type="ChEBI" id="CHEBI:29105"/>
        <label>2</label>
    </ligand>
</feature>
<feature type="binding site" evidence="1">
    <location>
        <position position="859"/>
    </location>
    <ligand>
        <name>Zn(2+)</name>
        <dbReference type="ChEBI" id="CHEBI:29105"/>
        <label>2</label>
    </ligand>
</feature>
<feature type="binding site" evidence="1">
    <location>
        <position position="862"/>
    </location>
    <ligand>
        <name>Zn(2+)</name>
        <dbReference type="ChEBI" id="CHEBI:29105"/>
        <label>2</label>
    </ligand>
</feature>
<gene>
    <name evidence="1" type="primary">rpoC</name>
    <name type="ordered locus">LA_3419</name>
</gene>
<dbReference type="EC" id="2.7.7.6" evidence="1"/>
<dbReference type="EMBL" id="AE010300">
    <property type="protein sequence ID" value="AAN50617.1"/>
    <property type="molecule type" value="Genomic_DNA"/>
</dbReference>
<dbReference type="RefSeq" id="NP_713599.1">
    <property type="nucleotide sequence ID" value="NC_004342.2"/>
</dbReference>
<dbReference type="RefSeq" id="WP_001256473.1">
    <property type="nucleotide sequence ID" value="NC_004342.2"/>
</dbReference>
<dbReference type="SMR" id="Q8F0S3"/>
<dbReference type="FunCoup" id="Q8F0S3">
    <property type="interactions" value="487"/>
</dbReference>
<dbReference type="STRING" id="189518.LA_3419"/>
<dbReference type="PaxDb" id="189518-LA_3419"/>
<dbReference type="EnsemblBacteria" id="AAN50617">
    <property type="protein sequence ID" value="AAN50617"/>
    <property type="gene ID" value="LA_3419"/>
</dbReference>
<dbReference type="GeneID" id="61144094"/>
<dbReference type="KEGG" id="lil:LA_3419"/>
<dbReference type="PATRIC" id="fig|189518.3.peg.3384"/>
<dbReference type="HOGENOM" id="CLU_000524_3_1_12"/>
<dbReference type="InParanoid" id="Q8F0S3"/>
<dbReference type="OrthoDB" id="9815296at2"/>
<dbReference type="Proteomes" id="UP000001408">
    <property type="component" value="Chromosome I"/>
</dbReference>
<dbReference type="GO" id="GO:0000428">
    <property type="term" value="C:DNA-directed RNA polymerase complex"/>
    <property type="evidence" value="ECO:0007669"/>
    <property type="project" value="UniProtKB-KW"/>
</dbReference>
<dbReference type="GO" id="GO:0003677">
    <property type="term" value="F:DNA binding"/>
    <property type="evidence" value="ECO:0007669"/>
    <property type="project" value="UniProtKB-UniRule"/>
</dbReference>
<dbReference type="GO" id="GO:0003899">
    <property type="term" value="F:DNA-directed RNA polymerase activity"/>
    <property type="evidence" value="ECO:0007669"/>
    <property type="project" value="UniProtKB-UniRule"/>
</dbReference>
<dbReference type="GO" id="GO:0000287">
    <property type="term" value="F:magnesium ion binding"/>
    <property type="evidence" value="ECO:0007669"/>
    <property type="project" value="UniProtKB-UniRule"/>
</dbReference>
<dbReference type="GO" id="GO:0008270">
    <property type="term" value="F:zinc ion binding"/>
    <property type="evidence" value="ECO:0007669"/>
    <property type="project" value="UniProtKB-UniRule"/>
</dbReference>
<dbReference type="GO" id="GO:0006351">
    <property type="term" value="P:DNA-templated transcription"/>
    <property type="evidence" value="ECO:0007669"/>
    <property type="project" value="UniProtKB-UniRule"/>
</dbReference>
<dbReference type="CDD" id="cd02655">
    <property type="entry name" value="RNAP_beta'_C"/>
    <property type="match status" value="1"/>
</dbReference>
<dbReference type="CDD" id="cd01609">
    <property type="entry name" value="RNAP_beta'_N"/>
    <property type="match status" value="1"/>
</dbReference>
<dbReference type="FunFam" id="4.10.860.120:FF:000001">
    <property type="entry name" value="DNA-directed RNA polymerase subunit beta"/>
    <property type="match status" value="1"/>
</dbReference>
<dbReference type="Gene3D" id="1.10.132.30">
    <property type="match status" value="1"/>
</dbReference>
<dbReference type="Gene3D" id="1.10.150.390">
    <property type="match status" value="1"/>
</dbReference>
<dbReference type="Gene3D" id="1.10.1790.20">
    <property type="match status" value="1"/>
</dbReference>
<dbReference type="Gene3D" id="1.10.40.90">
    <property type="match status" value="1"/>
</dbReference>
<dbReference type="Gene3D" id="2.40.40.20">
    <property type="match status" value="1"/>
</dbReference>
<dbReference type="Gene3D" id="2.40.50.100">
    <property type="match status" value="2"/>
</dbReference>
<dbReference type="Gene3D" id="4.10.860.120">
    <property type="entry name" value="RNA polymerase II, clamp domain"/>
    <property type="match status" value="1"/>
</dbReference>
<dbReference type="Gene3D" id="1.10.274.100">
    <property type="entry name" value="RNA polymerase Rpb1, domain 3"/>
    <property type="match status" value="1"/>
</dbReference>
<dbReference type="HAMAP" id="MF_01322">
    <property type="entry name" value="RNApol_bact_RpoC"/>
    <property type="match status" value="1"/>
</dbReference>
<dbReference type="InterPro" id="IPR045867">
    <property type="entry name" value="DNA-dir_RpoC_beta_prime"/>
</dbReference>
<dbReference type="InterPro" id="IPR012754">
    <property type="entry name" value="DNA-dir_RpoC_beta_prime_bact"/>
</dbReference>
<dbReference type="InterPro" id="IPR000722">
    <property type="entry name" value="RNA_pol_asu"/>
</dbReference>
<dbReference type="InterPro" id="IPR006592">
    <property type="entry name" value="RNA_pol_N"/>
</dbReference>
<dbReference type="InterPro" id="IPR007080">
    <property type="entry name" value="RNA_pol_Rpb1_1"/>
</dbReference>
<dbReference type="InterPro" id="IPR007066">
    <property type="entry name" value="RNA_pol_Rpb1_3"/>
</dbReference>
<dbReference type="InterPro" id="IPR042102">
    <property type="entry name" value="RNA_pol_Rpb1_3_sf"/>
</dbReference>
<dbReference type="InterPro" id="IPR007083">
    <property type="entry name" value="RNA_pol_Rpb1_4"/>
</dbReference>
<dbReference type="InterPro" id="IPR007081">
    <property type="entry name" value="RNA_pol_Rpb1_5"/>
</dbReference>
<dbReference type="InterPro" id="IPR044893">
    <property type="entry name" value="RNA_pol_Rpb1_clamp_domain"/>
</dbReference>
<dbReference type="InterPro" id="IPR038120">
    <property type="entry name" value="Rpb1_funnel_sf"/>
</dbReference>
<dbReference type="NCBIfam" id="TIGR02386">
    <property type="entry name" value="rpoC_TIGR"/>
    <property type="match status" value="1"/>
</dbReference>
<dbReference type="PANTHER" id="PTHR19376">
    <property type="entry name" value="DNA-DIRECTED RNA POLYMERASE"/>
    <property type="match status" value="1"/>
</dbReference>
<dbReference type="PANTHER" id="PTHR19376:SF54">
    <property type="entry name" value="DNA-DIRECTED RNA POLYMERASE SUBUNIT BETA"/>
    <property type="match status" value="1"/>
</dbReference>
<dbReference type="Pfam" id="PF04997">
    <property type="entry name" value="RNA_pol_Rpb1_1"/>
    <property type="match status" value="1"/>
</dbReference>
<dbReference type="Pfam" id="PF00623">
    <property type="entry name" value="RNA_pol_Rpb1_2"/>
    <property type="match status" value="2"/>
</dbReference>
<dbReference type="Pfam" id="PF04983">
    <property type="entry name" value="RNA_pol_Rpb1_3"/>
    <property type="match status" value="1"/>
</dbReference>
<dbReference type="Pfam" id="PF05000">
    <property type="entry name" value="RNA_pol_Rpb1_4"/>
    <property type="match status" value="1"/>
</dbReference>
<dbReference type="Pfam" id="PF04998">
    <property type="entry name" value="RNA_pol_Rpb1_5"/>
    <property type="match status" value="1"/>
</dbReference>
<dbReference type="SMART" id="SM00663">
    <property type="entry name" value="RPOLA_N"/>
    <property type="match status" value="1"/>
</dbReference>
<dbReference type="SUPFAM" id="SSF64484">
    <property type="entry name" value="beta and beta-prime subunits of DNA dependent RNA-polymerase"/>
    <property type="match status" value="1"/>
</dbReference>
<protein>
    <recommendedName>
        <fullName evidence="1">DNA-directed RNA polymerase subunit beta'</fullName>
        <shortName evidence="1">RNAP subunit beta'</shortName>
        <ecNumber evidence="1">2.7.7.6</ecNumber>
    </recommendedName>
    <alternativeName>
        <fullName evidence="1">RNA polymerase subunit beta'</fullName>
    </alternativeName>
    <alternativeName>
        <fullName evidence="1">Transcriptase subunit beta'</fullName>
    </alternativeName>
</protein>
<accession>Q8F0S3</accession>
<sequence>MRSHNDFESITIRLASPERIKEWSYGEVKKPETINYRTLKPEKDGLFCEKIFGTTKDWECYCGKFKSIRYKGVVCDKCGVEVTHSKVRRERMGHIELAAPVSHIWYYRSVPSRMGLLLDMTVNQLKSVLYFEKYVIIDPADSGRNRGELIDEEEYHGYLDEYGDKFVAGIGADAIKELLARIDVDAEARMIRQKIQDKDKISDKRILKRLEVLEAFRDSGNRPEWMVLDIVPVIPPELRPMVQLEGGRFATSDLNDLYRRVINRNNRLKRLLALKAPEIIVRNEKRMLQEAVDALFDNSRRKRAVKGKGNRPLKSISDMLKGKQGRFRQNLLGKRVDYSGRSVIVVGPELKYHEMGLPKKMALELFKPFIMKRLVDLDLAPNIKSAKKKVEAEDKEVFDVLEYVVKEHPVMLNRAPTLHRLGIQAFLPVLVEGKAIKLHPLVCHAFNADFDGDQMAIHVPLTPKAQLETWMLMLSPHNILNPANGHPICGPTQDIVLGIYYLTSELPSEPGVPLKSFSNLEEVHYAIDRGVVEFRTKISVYHQGKILETTPGRLIFNTILPEGYAYVNRPLSDKETNRIIADVYDKYGPAKTVLMLDDIKKLGYRYATLFAPTISIEDIRVSPGKVGLVGDANKEVEKADSEYRKGIITNEERRKKVIEIWTKTNDLITESMFKELEKDKGGFNPVFIMAASGARGSKQQIRQLAGMRGLMAKPSGEIIELAIRSNFREGLSVLEFFISTHGARKGLADTALKTADAGYLTRRLVDISQDVIISEDDCGTEESISLGVVKEGENVIVSLNDRVFGRYTAEDVIDPVTDQVVYPRNTLITREVGQKVENLGYDKIRVRSPLTCESKQGVCIRCYGMDMARLIPAEIGEAVGTIAAQSIGQPGTQLTMRTFHIGGAASAKVQEKEHKVSYTGIVNNINGRLITNEKSQSVFSRRGSIVIQRLIQQYKTEELSNLRVENGQKVDKGELVATSPAGENITSEMPGTIHIENGLFRILGEEAVIPVKTGTIVNVKVNDITQPNQPLAEFDPYNEVGISEIDGTVQWMDLEIGKNVRRDEDLRTSNILLKVIEQRREKLNPRIAVISGGSREEYSVPVDAIISVQDGDKVKAGDILFKIPTVAEKTRDITGGLPRVDELFEARRPKDATTLAETDGKIEISGEIVKEKRVLYIHPDNPDLEKVKVTIPIGKQIRVRNGDFVKRGDQIDDGNLDPHDILRVKGVTALQVYLVQEVQEVYRLQGVHINDKHIEVVVRQMLRKVLITDSGDTSFVNQQQIDRLVFNEENKRVIAEGGSPAESVPILLGLTKASLNTESFFSAASFQETTKVLTDAAIKGKTDNLMGLKENVIIGHMIPAGTGTKKYKDIAVFKSAYGDLDRPLEEEEEEEIPQAIAEESDAEE</sequence>
<organism>
    <name type="scientific">Leptospira interrogans serogroup Icterohaemorrhagiae serovar Lai (strain 56601)</name>
    <dbReference type="NCBI Taxonomy" id="189518"/>
    <lineage>
        <taxon>Bacteria</taxon>
        <taxon>Pseudomonadati</taxon>
        <taxon>Spirochaetota</taxon>
        <taxon>Spirochaetia</taxon>
        <taxon>Leptospirales</taxon>
        <taxon>Leptospiraceae</taxon>
        <taxon>Leptospira</taxon>
    </lineage>
</organism>
<proteinExistence type="inferred from homology"/>
<evidence type="ECO:0000255" key="1">
    <source>
        <dbReference type="HAMAP-Rule" id="MF_01322"/>
    </source>
</evidence>
<evidence type="ECO:0000256" key="2">
    <source>
        <dbReference type="SAM" id="MobiDB-lite"/>
    </source>
</evidence>
<comment type="function">
    <text evidence="1">DNA-dependent RNA polymerase catalyzes the transcription of DNA into RNA using the four ribonucleoside triphosphates as substrates.</text>
</comment>
<comment type="catalytic activity">
    <reaction evidence="1">
        <text>RNA(n) + a ribonucleoside 5'-triphosphate = RNA(n+1) + diphosphate</text>
        <dbReference type="Rhea" id="RHEA:21248"/>
        <dbReference type="Rhea" id="RHEA-COMP:14527"/>
        <dbReference type="Rhea" id="RHEA-COMP:17342"/>
        <dbReference type="ChEBI" id="CHEBI:33019"/>
        <dbReference type="ChEBI" id="CHEBI:61557"/>
        <dbReference type="ChEBI" id="CHEBI:140395"/>
        <dbReference type="EC" id="2.7.7.6"/>
    </reaction>
</comment>
<comment type="cofactor">
    <cofactor evidence="1">
        <name>Mg(2+)</name>
        <dbReference type="ChEBI" id="CHEBI:18420"/>
    </cofactor>
    <text evidence="1">Binds 1 Mg(2+) ion per subunit.</text>
</comment>
<comment type="cofactor">
    <cofactor evidence="1">
        <name>Zn(2+)</name>
        <dbReference type="ChEBI" id="CHEBI:29105"/>
    </cofactor>
    <text evidence="1">Binds 2 Zn(2+) ions per subunit.</text>
</comment>
<comment type="subunit">
    <text evidence="1">The RNAP catalytic core consists of 2 alpha, 1 beta, 1 beta' and 1 omega subunit. When a sigma factor is associated with the core the holoenzyme is formed, which can initiate transcription.</text>
</comment>
<comment type="similarity">
    <text evidence="1">Belongs to the RNA polymerase beta' chain family.</text>
</comment>
<reference key="1">
    <citation type="journal article" date="2003" name="Nature">
        <title>Unique physiological and pathogenic features of Leptospira interrogans revealed by whole-genome sequencing.</title>
        <authorList>
            <person name="Ren S.-X."/>
            <person name="Fu G."/>
            <person name="Jiang X.-G."/>
            <person name="Zeng R."/>
            <person name="Miao Y.-G."/>
            <person name="Xu H."/>
            <person name="Zhang Y.-X."/>
            <person name="Xiong H."/>
            <person name="Lu G."/>
            <person name="Lu L.-F."/>
            <person name="Jiang H.-Q."/>
            <person name="Jia J."/>
            <person name="Tu Y.-F."/>
            <person name="Jiang J.-X."/>
            <person name="Gu W.-Y."/>
            <person name="Zhang Y.-Q."/>
            <person name="Cai Z."/>
            <person name="Sheng H.-H."/>
            <person name="Yin H.-F."/>
            <person name="Zhang Y."/>
            <person name="Zhu G.-F."/>
            <person name="Wan M."/>
            <person name="Huang H.-L."/>
            <person name="Qian Z."/>
            <person name="Wang S.-Y."/>
            <person name="Ma W."/>
            <person name="Yao Z.-J."/>
            <person name="Shen Y."/>
            <person name="Qiang B.-Q."/>
            <person name="Xia Q.-C."/>
            <person name="Guo X.-K."/>
            <person name="Danchin A."/>
            <person name="Saint Girons I."/>
            <person name="Somerville R.L."/>
            <person name="Wen Y.-M."/>
            <person name="Shi M.-H."/>
            <person name="Chen Z."/>
            <person name="Xu J.-G."/>
            <person name="Zhao G.-P."/>
        </authorList>
    </citation>
    <scope>NUCLEOTIDE SEQUENCE [LARGE SCALE GENOMIC DNA]</scope>
    <source>
        <strain>56601</strain>
    </source>
</reference>
<keyword id="KW-0240">DNA-directed RNA polymerase</keyword>
<keyword id="KW-0460">Magnesium</keyword>
<keyword id="KW-0479">Metal-binding</keyword>
<keyword id="KW-0548">Nucleotidyltransferase</keyword>
<keyword id="KW-1185">Reference proteome</keyword>
<keyword id="KW-0804">Transcription</keyword>
<keyword id="KW-0808">Transferase</keyword>
<keyword id="KW-0862">Zinc</keyword>